<sequence>MTERRIIHIDMDYFFAQVEMRDNPKLKGKPVIVGGKASSRGVVSTASYEARKYGVHSAMPMSQAHKLCPNGYFVTSNFGAYRETSAQIMSIFRSYTDKVEPMSLDEAYLDITELVRPDLPASKIAQYIRKDILENTHLTASAGVSYNKFLAKLASGMNKPYGMTVIDYQNVHDILMTLDIGDFPGVGKASKKVMHDNGIFNGRDLYEKTEFELIRLFGKRGRGLYNKARGIDHSEVKSSRVRKSVGTERTFATDVNDDEEILRKVWELSGKTAERLNKLQKSAKTVTVKIKTYQFETLSKQMSLRDSVSSEEDIYNIAYLLYNDLKDP</sequence>
<name>DPO4_STAAB</name>
<evidence type="ECO:0000255" key="1">
    <source>
        <dbReference type="HAMAP-Rule" id="MF_01113"/>
    </source>
</evidence>
<proteinExistence type="inferred from homology"/>
<dbReference type="EC" id="2.7.7.7" evidence="1"/>
<dbReference type="EMBL" id="AJ938182">
    <property type="protein sequence ID" value="CAI81516.1"/>
    <property type="molecule type" value="Genomic_DNA"/>
</dbReference>
<dbReference type="SMR" id="Q2YU32"/>
<dbReference type="KEGG" id="sab:SAB1827c"/>
<dbReference type="HOGENOM" id="CLU_012348_1_2_9"/>
<dbReference type="GO" id="GO:0005829">
    <property type="term" value="C:cytosol"/>
    <property type="evidence" value="ECO:0007669"/>
    <property type="project" value="TreeGrafter"/>
</dbReference>
<dbReference type="GO" id="GO:0003684">
    <property type="term" value="F:damaged DNA binding"/>
    <property type="evidence" value="ECO:0007669"/>
    <property type="project" value="InterPro"/>
</dbReference>
<dbReference type="GO" id="GO:0003887">
    <property type="term" value="F:DNA-directed DNA polymerase activity"/>
    <property type="evidence" value="ECO:0007669"/>
    <property type="project" value="UniProtKB-UniRule"/>
</dbReference>
<dbReference type="GO" id="GO:0000287">
    <property type="term" value="F:magnesium ion binding"/>
    <property type="evidence" value="ECO:0007669"/>
    <property type="project" value="UniProtKB-UniRule"/>
</dbReference>
<dbReference type="GO" id="GO:0006261">
    <property type="term" value="P:DNA-templated DNA replication"/>
    <property type="evidence" value="ECO:0007669"/>
    <property type="project" value="UniProtKB-UniRule"/>
</dbReference>
<dbReference type="GO" id="GO:0042276">
    <property type="term" value="P:error-prone translesion synthesis"/>
    <property type="evidence" value="ECO:0007669"/>
    <property type="project" value="TreeGrafter"/>
</dbReference>
<dbReference type="GO" id="GO:0009432">
    <property type="term" value="P:SOS response"/>
    <property type="evidence" value="ECO:0007669"/>
    <property type="project" value="TreeGrafter"/>
</dbReference>
<dbReference type="CDD" id="cd03586">
    <property type="entry name" value="PolY_Pol_IV_kappa"/>
    <property type="match status" value="1"/>
</dbReference>
<dbReference type="FunFam" id="3.30.1490.100:FF:000004">
    <property type="entry name" value="DNA polymerase IV"/>
    <property type="match status" value="1"/>
</dbReference>
<dbReference type="FunFam" id="3.40.1170.60:FF:000001">
    <property type="entry name" value="DNA polymerase IV"/>
    <property type="match status" value="1"/>
</dbReference>
<dbReference type="Gene3D" id="3.30.70.270">
    <property type="match status" value="1"/>
</dbReference>
<dbReference type="Gene3D" id="3.40.1170.60">
    <property type="match status" value="1"/>
</dbReference>
<dbReference type="Gene3D" id="1.10.150.20">
    <property type="entry name" value="5' to 3' exonuclease, C-terminal subdomain"/>
    <property type="match status" value="1"/>
</dbReference>
<dbReference type="Gene3D" id="3.30.1490.100">
    <property type="entry name" value="DNA polymerase, Y-family, little finger domain"/>
    <property type="match status" value="1"/>
</dbReference>
<dbReference type="HAMAP" id="MF_01113">
    <property type="entry name" value="DNApol_IV"/>
    <property type="match status" value="1"/>
</dbReference>
<dbReference type="InterPro" id="IPR043502">
    <property type="entry name" value="DNA/RNA_pol_sf"/>
</dbReference>
<dbReference type="InterPro" id="IPR036775">
    <property type="entry name" value="DNA_pol_Y-fam_lit_finger_sf"/>
</dbReference>
<dbReference type="InterPro" id="IPR017961">
    <property type="entry name" value="DNA_pol_Y-fam_little_finger"/>
</dbReference>
<dbReference type="InterPro" id="IPR050116">
    <property type="entry name" value="DNA_polymerase-Y"/>
</dbReference>
<dbReference type="InterPro" id="IPR022880">
    <property type="entry name" value="DNApol_IV"/>
</dbReference>
<dbReference type="InterPro" id="IPR043128">
    <property type="entry name" value="Rev_trsase/Diguanyl_cyclase"/>
</dbReference>
<dbReference type="InterPro" id="IPR001126">
    <property type="entry name" value="UmuC"/>
</dbReference>
<dbReference type="NCBIfam" id="NF002677">
    <property type="entry name" value="PRK02406.1"/>
    <property type="match status" value="1"/>
</dbReference>
<dbReference type="NCBIfam" id="NF010731">
    <property type="entry name" value="PRK14133.1"/>
    <property type="match status" value="1"/>
</dbReference>
<dbReference type="PANTHER" id="PTHR11076:SF33">
    <property type="entry name" value="DNA POLYMERASE KAPPA"/>
    <property type="match status" value="1"/>
</dbReference>
<dbReference type="PANTHER" id="PTHR11076">
    <property type="entry name" value="DNA REPAIR POLYMERASE UMUC / TRANSFERASE FAMILY MEMBER"/>
    <property type="match status" value="1"/>
</dbReference>
<dbReference type="Pfam" id="PF00817">
    <property type="entry name" value="IMS"/>
    <property type="match status" value="1"/>
</dbReference>
<dbReference type="Pfam" id="PF11799">
    <property type="entry name" value="IMS_C"/>
    <property type="match status" value="1"/>
</dbReference>
<dbReference type="SUPFAM" id="SSF56672">
    <property type="entry name" value="DNA/RNA polymerases"/>
    <property type="match status" value="1"/>
</dbReference>
<dbReference type="SUPFAM" id="SSF100879">
    <property type="entry name" value="Lesion bypass DNA polymerase (Y-family), little finger domain"/>
    <property type="match status" value="1"/>
</dbReference>
<dbReference type="PROSITE" id="PS50173">
    <property type="entry name" value="UMUC"/>
    <property type="match status" value="1"/>
</dbReference>
<gene>
    <name evidence="1" type="primary">dinB</name>
    <name type="ordered locus">SAB1827c</name>
</gene>
<organism>
    <name type="scientific">Staphylococcus aureus (strain bovine RF122 / ET3-1)</name>
    <dbReference type="NCBI Taxonomy" id="273036"/>
    <lineage>
        <taxon>Bacteria</taxon>
        <taxon>Bacillati</taxon>
        <taxon>Bacillota</taxon>
        <taxon>Bacilli</taxon>
        <taxon>Bacillales</taxon>
        <taxon>Staphylococcaceae</taxon>
        <taxon>Staphylococcus</taxon>
    </lineage>
</organism>
<accession>Q2YU32</accession>
<keyword id="KW-0963">Cytoplasm</keyword>
<keyword id="KW-0227">DNA damage</keyword>
<keyword id="KW-0234">DNA repair</keyword>
<keyword id="KW-0235">DNA replication</keyword>
<keyword id="KW-0238">DNA-binding</keyword>
<keyword id="KW-0239">DNA-directed DNA polymerase</keyword>
<keyword id="KW-0460">Magnesium</keyword>
<keyword id="KW-0479">Metal-binding</keyword>
<keyword id="KW-0515">Mutator protein</keyword>
<keyword id="KW-0548">Nucleotidyltransferase</keyword>
<keyword id="KW-0808">Transferase</keyword>
<reference key="1">
    <citation type="journal article" date="2007" name="PLoS ONE">
        <title>Molecular correlates of host specialization in Staphylococcus aureus.</title>
        <authorList>
            <person name="Herron-Olson L."/>
            <person name="Fitzgerald J.R."/>
            <person name="Musser J.M."/>
            <person name="Kapur V."/>
        </authorList>
    </citation>
    <scope>NUCLEOTIDE SEQUENCE [LARGE SCALE GENOMIC DNA]</scope>
    <source>
        <strain>bovine RF122 / ET3-1</strain>
    </source>
</reference>
<protein>
    <recommendedName>
        <fullName evidence="1">DNA polymerase IV</fullName>
        <shortName evidence="1">Pol IV</shortName>
        <ecNumber evidence="1">2.7.7.7</ecNumber>
    </recommendedName>
</protein>
<feature type="chain" id="PRO_1000084946" description="DNA polymerase IV">
    <location>
        <begin position="1"/>
        <end position="328"/>
    </location>
</feature>
<feature type="domain" description="UmuC" evidence="1">
    <location>
        <begin position="6"/>
        <end position="187"/>
    </location>
</feature>
<feature type="active site" evidence="1">
    <location>
        <position position="106"/>
    </location>
</feature>
<feature type="binding site" evidence="1">
    <location>
        <position position="10"/>
    </location>
    <ligand>
        <name>Mg(2+)</name>
        <dbReference type="ChEBI" id="CHEBI:18420"/>
    </ligand>
</feature>
<feature type="binding site" evidence="1">
    <location>
        <position position="105"/>
    </location>
    <ligand>
        <name>Mg(2+)</name>
        <dbReference type="ChEBI" id="CHEBI:18420"/>
    </ligand>
</feature>
<feature type="site" description="Substrate discrimination" evidence="1">
    <location>
        <position position="15"/>
    </location>
</feature>
<comment type="function">
    <text evidence="1">Poorly processive, error-prone DNA polymerase involved in untargeted mutagenesis. Copies undamaged DNA at stalled replication forks, which arise in vivo from mismatched or misaligned primer ends. These misaligned primers can be extended by PolIV. Exhibits no 3'-5' exonuclease (proofreading) activity. May be involved in translesional synthesis, in conjunction with the beta clamp from PolIII.</text>
</comment>
<comment type="catalytic activity">
    <reaction evidence="1">
        <text>DNA(n) + a 2'-deoxyribonucleoside 5'-triphosphate = DNA(n+1) + diphosphate</text>
        <dbReference type="Rhea" id="RHEA:22508"/>
        <dbReference type="Rhea" id="RHEA-COMP:17339"/>
        <dbReference type="Rhea" id="RHEA-COMP:17340"/>
        <dbReference type="ChEBI" id="CHEBI:33019"/>
        <dbReference type="ChEBI" id="CHEBI:61560"/>
        <dbReference type="ChEBI" id="CHEBI:173112"/>
        <dbReference type="EC" id="2.7.7.7"/>
    </reaction>
</comment>
<comment type="cofactor">
    <cofactor evidence="1">
        <name>Mg(2+)</name>
        <dbReference type="ChEBI" id="CHEBI:18420"/>
    </cofactor>
    <text evidence="1">Binds 2 magnesium ions per subunit.</text>
</comment>
<comment type="subunit">
    <text evidence="1">Monomer.</text>
</comment>
<comment type="subcellular location">
    <subcellularLocation>
        <location evidence="1">Cytoplasm</location>
    </subcellularLocation>
</comment>
<comment type="similarity">
    <text evidence="1">Belongs to the DNA polymerase type-Y family.</text>
</comment>